<dbReference type="EMBL" id="AF110737">
    <property type="protein sequence ID" value="AAD09418.1"/>
    <property type="molecule type" value="Genomic_DNA"/>
</dbReference>
<dbReference type="EMBL" id="AE006469">
    <property type="protein sequence ID" value="AAK65922.1"/>
    <property type="molecule type" value="Genomic_DNA"/>
</dbReference>
<dbReference type="PIR" id="H95419">
    <property type="entry name" value="H95419"/>
</dbReference>
<dbReference type="PIR" id="T46820">
    <property type="entry name" value="T46820"/>
</dbReference>
<dbReference type="RefSeq" id="NP_436510.1">
    <property type="nucleotide sequence ID" value="NC_003037.1"/>
</dbReference>
<dbReference type="RefSeq" id="WP_010968207.1">
    <property type="nucleotide sequence ID" value="NC_003037.1"/>
</dbReference>
<dbReference type="SMR" id="Q9Z3Q6"/>
<dbReference type="EnsemblBacteria" id="AAK65922">
    <property type="protein sequence ID" value="AAK65922"/>
    <property type="gene ID" value="SMa2412"/>
</dbReference>
<dbReference type="KEGG" id="sme:SMa2412"/>
<dbReference type="PATRIC" id="fig|266834.11.peg.1317"/>
<dbReference type="HOGENOM" id="CLU_049704_2_1_5"/>
<dbReference type="OrthoDB" id="252470at2"/>
<dbReference type="Proteomes" id="UP000001976">
    <property type="component" value="Plasmid pSymA"/>
</dbReference>
<dbReference type="GO" id="GO:0003700">
    <property type="term" value="F:DNA-binding transcription factor activity"/>
    <property type="evidence" value="ECO:0007669"/>
    <property type="project" value="InterPro"/>
</dbReference>
<dbReference type="GO" id="GO:0043565">
    <property type="term" value="F:sequence-specific DNA binding"/>
    <property type="evidence" value="ECO:0007669"/>
    <property type="project" value="InterPro"/>
</dbReference>
<dbReference type="GO" id="GO:0006826">
    <property type="term" value="P:iron ion transport"/>
    <property type="evidence" value="ECO:0007669"/>
    <property type="project" value="UniProtKB-KW"/>
</dbReference>
<dbReference type="Gene3D" id="1.10.10.60">
    <property type="entry name" value="Homeodomain-like"/>
    <property type="match status" value="1"/>
</dbReference>
<dbReference type="InterPro" id="IPR009057">
    <property type="entry name" value="Homeodomain-like_sf"/>
</dbReference>
<dbReference type="InterPro" id="IPR018060">
    <property type="entry name" value="HTH_AraC"/>
</dbReference>
<dbReference type="InterPro" id="IPR020449">
    <property type="entry name" value="Tscrpt_reg_AraC-type_HTH"/>
</dbReference>
<dbReference type="PANTHER" id="PTHR43280">
    <property type="entry name" value="ARAC-FAMILY TRANSCRIPTIONAL REGULATOR"/>
    <property type="match status" value="1"/>
</dbReference>
<dbReference type="PANTHER" id="PTHR43280:SF31">
    <property type="entry name" value="TRANSCRIPTIONAL REGULATORY PROTEIN"/>
    <property type="match status" value="1"/>
</dbReference>
<dbReference type="Pfam" id="PF12833">
    <property type="entry name" value="HTH_18"/>
    <property type="match status" value="1"/>
</dbReference>
<dbReference type="PRINTS" id="PR00032">
    <property type="entry name" value="HTHARAC"/>
</dbReference>
<dbReference type="SMART" id="SM00342">
    <property type="entry name" value="HTH_ARAC"/>
    <property type="match status" value="1"/>
</dbReference>
<dbReference type="SUPFAM" id="SSF46689">
    <property type="entry name" value="Homeodomain-like"/>
    <property type="match status" value="1"/>
</dbReference>
<dbReference type="PROSITE" id="PS01124">
    <property type="entry name" value="HTH_ARAC_FAMILY_2"/>
    <property type="match status" value="1"/>
</dbReference>
<keyword id="KW-0010">Activator</keyword>
<keyword id="KW-0238">DNA-binding</keyword>
<keyword id="KW-0406">Ion transport</keyword>
<keyword id="KW-0408">Iron</keyword>
<keyword id="KW-0410">Iron transport</keyword>
<keyword id="KW-0614">Plasmid</keyword>
<keyword id="KW-1185">Reference proteome</keyword>
<keyword id="KW-0804">Transcription</keyword>
<keyword id="KW-0805">Transcription regulation</keyword>
<keyword id="KW-0813">Transport</keyword>
<proteinExistence type="predicted"/>
<name>RHRA_RHIME</name>
<protein>
    <recommendedName>
        <fullName>Transcriptional activator RhrA</fullName>
    </recommendedName>
</protein>
<organism>
    <name type="scientific">Rhizobium meliloti (strain 1021)</name>
    <name type="common">Ensifer meliloti</name>
    <name type="synonym">Sinorhizobium meliloti</name>
    <dbReference type="NCBI Taxonomy" id="266834"/>
    <lineage>
        <taxon>Bacteria</taxon>
        <taxon>Pseudomonadati</taxon>
        <taxon>Pseudomonadota</taxon>
        <taxon>Alphaproteobacteria</taxon>
        <taxon>Hyphomicrobiales</taxon>
        <taxon>Rhizobiaceae</taxon>
        <taxon>Sinorhizobium/Ensifer group</taxon>
        <taxon>Sinorhizobium</taxon>
    </lineage>
</organism>
<gene>
    <name type="primary">rhrA</name>
    <name type="ordered locus">RA1264</name>
    <name type="ORF">SMa2412</name>
</gene>
<geneLocation type="plasmid">
    <name>pSymA</name>
    <name>megaplasmid 1</name>
</geneLocation>
<sequence>METIRPLKFGTLSLPDRESRLVCRSILLDMLGEATIAPDEGDLTGVTGLFWKYVSLSLATVYFPRTMLRVNASGMGDSGVVILRAMDSPLVIRHRRIKVEAARADVIFLPSDASSEITLPEGGRFDCAHLPAYALASKRDLLKPIMMQPLAAECLPLQLLTNYAGYLLRQEYQSEEHAGMMVAHFYDLLPVLAQDIGNVSPRETPHNRMASIKMRVEQNLANGSFSITDVAEAERITPRAIQKFFSREGTTFSRYVLGRRLSLAKSLILAEGEATSISQIAYNVGFNDLSYFNRTFRSRYGVRPSDLRRLAAAA</sequence>
<accession>Q9Z3Q6</accession>
<feature type="chain" id="PRO_0000194575" description="Transcriptional activator RhrA">
    <location>
        <begin position="1"/>
        <end position="314"/>
    </location>
</feature>
<feature type="domain" description="HTH araC/xylS-type" evidence="1">
    <location>
        <begin position="210"/>
        <end position="310"/>
    </location>
</feature>
<feature type="DNA-binding region" description="H-T-H motif" evidence="1">
    <location>
        <begin position="228"/>
        <end position="249"/>
    </location>
</feature>
<feature type="DNA-binding region" description="H-T-H motif" evidence="1">
    <location>
        <begin position="277"/>
        <end position="300"/>
    </location>
</feature>
<evidence type="ECO:0000255" key="1">
    <source>
        <dbReference type="PROSITE-ProRule" id="PRU00593"/>
    </source>
</evidence>
<comment type="function">
    <text>Transcriptional activator of the rhizobactin regulon.</text>
</comment>
<reference key="1">
    <citation type="journal article" date="2001" name="J. Bacteriol.">
        <title>Genetic organization of the region encoding regulation, biosynthesis, and transport of rhizobactin 1021, a siderophore produced by Sinorhizobium meliloti.</title>
        <authorList>
            <person name="Lynch D."/>
            <person name="O'Brien J."/>
            <person name="Welch T."/>
            <person name="Clarke P."/>
            <person name="Cuiv P.O."/>
            <person name="Crosa J.H."/>
            <person name="O'Connell M."/>
        </authorList>
    </citation>
    <scope>NUCLEOTIDE SEQUENCE [GENOMIC DNA]</scope>
    <source>
        <strain>RCR2011 / SU47</strain>
    </source>
</reference>
<reference key="2">
    <citation type="journal article" date="2001" name="Proc. Natl. Acad. Sci. U.S.A.">
        <title>Nucleotide sequence and predicted functions of the entire Sinorhizobium meliloti pSymA megaplasmid.</title>
        <authorList>
            <person name="Barnett M.J."/>
            <person name="Fisher R.F."/>
            <person name="Jones T."/>
            <person name="Komp C."/>
            <person name="Abola A.P."/>
            <person name="Barloy-Hubler F."/>
            <person name="Bowser L."/>
            <person name="Capela D."/>
            <person name="Galibert F."/>
            <person name="Gouzy J."/>
            <person name="Gurjal M."/>
            <person name="Hong A."/>
            <person name="Huizar L."/>
            <person name="Hyman R.W."/>
            <person name="Kahn D."/>
            <person name="Kahn M.L."/>
            <person name="Kalman S."/>
            <person name="Keating D.H."/>
            <person name="Palm C."/>
            <person name="Peck M.C."/>
            <person name="Surzycki R."/>
            <person name="Wells D.H."/>
            <person name="Yeh K.-C."/>
            <person name="Davis R.W."/>
            <person name="Federspiel N.A."/>
            <person name="Long S.R."/>
        </authorList>
    </citation>
    <scope>NUCLEOTIDE SEQUENCE [LARGE SCALE GENOMIC DNA]</scope>
    <source>
        <strain>1021</strain>
    </source>
</reference>
<reference key="3">
    <citation type="journal article" date="2001" name="Science">
        <title>The composite genome of the legume symbiont Sinorhizobium meliloti.</title>
        <authorList>
            <person name="Galibert F."/>
            <person name="Finan T.M."/>
            <person name="Long S.R."/>
            <person name="Puehler A."/>
            <person name="Abola P."/>
            <person name="Ampe F."/>
            <person name="Barloy-Hubler F."/>
            <person name="Barnett M.J."/>
            <person name="Becker A."/>
            <person name="Boistard P."/>
            <person name="Bothe G."/>
            <person name="Boutry M."/>
            <person name="Bowser L."/>
            <person name="Buhrmester J."/>
            <person name="Cadieu E."/>
            <person name="Capela D."/>
            <person name="Chain P."/>
            <person name="Cowie A."/>
            <person name="Davis R.W."/>
            <person name="Dreano S."/>
            <person name="Federspiel N.A."/>
            <person name="Fisher R.F."/>
            <person name="Gloux S."/>
            <person name="Godrie T."/>
            <person name="Goffeau A."/>
            <person name="Golding B."/>
            <person name="Gouzy J."/>
            <person name="Gurjal M."/>
            <person name="Hernandez-Lucas I."/>
            <person name="Hong A."/>
            <person name="Huizar L."/>
            <person name="Hyman R.W."/>
            <person name="Jones T."/>
            <person name="Kahn D."/>
            <person name="Kahn M.L."/>
            <person name="Kalman S."/>
            <person name="Keating D.H."/>
            <person name="Kiss E."/>
            <person name="Komp C."/>
            <person name="Lelaure V."/>
            <person name="Masuy D."/>
            <person name="Palm C."/>
            <person name="Peck M.C."/>
            <person name="Pohl T.M."/>
            <person name="Portetelle D."/>
            <person name="Purnelle B."/>
            <person name="Ramsperger U."/>
            <person name="Surzycki R."/>
            <person name="Thebault P."/>
            <person name="Vandenbol M."/>
            <person name="Vorhoelter F.J."/>
            <person name="Weidner S."/>
            <person name="Wells D.H."/>
            <person name="Wong K."/>
            <person name="Yeh K.-C."/>
            <person name="Batut J."/>
        </authorList>
    </citation>
    <scope>NUCLEOTIDE SEQUENCE [LARGE SCALE GENOMIC DNA]</scope>
    <source>
        <strain>1021</strain>
    </source>
</reference>